<name>GLMM_PSYIN</name>
<evidence type="ECO:0000255" key="1">
    <source>
        <dbReference type="HAMAP-Rule" id="MF_01554"/>
    </source>
</evidence>
<organism>
    <name type="scientific">Psychromonas ingrahamii (strain DSM 17664 / CCUG 51855 / 37)</name>
    <dbReference type="NCBI Taxonomy" id="357804"/>
    <lineage>
        <taxon>Bacteria</taxon>
        <taxon>Pseudomonadati</taxon>
        <taxon>Pseudomonadota</taxon>
        <taxon>Gammaproteobacteria</taxon>
        <taxon>Alteromonadales</taxon>
        <taxon>Psychromonadaceae</taxon>
        <taxon>Psychromonas</taxon>
    </lineage>
</organism>
<reference key="1">
    <citation type="journal article" date="2008" name="BMC Genomics">
        <title>Genomics of an extreme psychrophile, Psychromonas ingrahamii.</title>
        <authorList>
            <person name="Riley M."/>
            <person name="Staley J.T."/>
            <person name="Danchin A."/>
            <person name="Wang T.Z."/>
            <person name="Brettin T.S."/>
            <person name="Hauser L.J."/>
            <person name="Land M.L."/>
            <person name="Thompson L.S."/>
        </authorList>
    </citation>
    <scope>NUCLEOTIDE SEQUENCE [LARGE SCALE GENOMIC DNA]</scope>
    <source>
        <strain>DSM 17664 / CCUG 51855 / 37</strain>
    </source>
</reference>
<dbReference type="EC" id="5.4.2.10" evidence="1"/>
<dbReference type="EMBL" id="CP000510">
    <property type="protein sequence ID" value="ABM02656.1"/>
    <property type="molecule type" value="Genomic_DNA"/>
</dbReference>
<dbReference type="RefSeq" id="WP_011769219.1">
    <property type="nucleotide sequence ID" value="NC_008709.1"/>
</dbReference>
<dbReference type="SMR" id="A1ST41"/>
<dbReference type="STRING" id="357804.Ping_0813"/>
<dbReference type="KEGG" id="pin:Ping_0813"/>
<dbReference type="eggNOG" id="COG1109">
    <property type="taxonomic scope" value="Bacteria"/>
</dbReference>
<dbReference type="HOGENOM" id="CLU_016950_7_0_6"/>
<dbReference type="OrthoDB" id="9803322at2"/>
<dbReference type="Proteomes" id="UP000000639">
    <property type="component" value="Chromosome"/>
</dbReference>
<dbReference type="GO" id="GO:0005829">
    <property type="term" value="C:cytosol"/>
    <property type="evidence" value="ECO:0007669"/>
    <property type="project" value="TreeGrafter"/>
</dbReference>
<dbReference type="GO" id="GO:0000287">
    <property type="term" value="F:magnesium ion binding"/>
    <property type="evidence" value="ECO:0007669"/>
    <property type="project" value="UniProtKB-UniRule"/>
</dbReference>
<dbReference type="GO" id="GO:0008966">
    <property type="term" value="F:phosphoglucosamine mutase activity"/>
    <property type="evidence" value="ECO:0007669"/>
    <property type="project" value="UniProtKB-UniRule"/>
</dbReference>
<dbReference type="GO" id="GO:0004615">
    <property type="term" value="F:phosphomannomutase activity"/>
    <property type="evidence" value="ECO:0007669"/>
    <property type="project" value="TreeGrafter"/>
</dbReference>
<dbReference type="GO" id="GO:0005975">
    <property type="term" value="P:carbohydrate metabolic process"/>
    <property type="evidence" value="ECO:0007669"/>
    <property type="project" value="InterPro"/>
</dbReference>
<dbReference type="GO" id="GO:0009252">
    <property type="term" value="P:peptidoglycan biosynthetic process"/>
    <property type="evidence" value="ECO:0007669"/>
    <property type="project" value="TreeGrafter"/>
</dbReference>
<dbReference type="GO" id="GO:0006048">
    <property type="term" value="P:UDP-N-acetylglucosamine biosynthetic process"/>
    <property type="evidence" value="ECO:0007669"/>
    <property type="project" value="TreeGrafter"/>
</dbReference>
<dbReference type="CDD" id="cd05802">
    <property type="entry name" value="GlmM"/>
    <property type="match status" value="1"/>
</dbReference>
<dbReference type="FunFam" id="3.40.120.10:FF:000001">
    <property type="entry name" value="Phosphoglucosamine mutase"/>
    <property type="match status" value="1"/>
</dbReference>
<dbReference type="FunFam" id="3.40.120.10:FF:000003">
    <property type="entry name" value="Phosphoglucosamine mutase"/>
    <property type="match status" value="1"/>
</dbReference>
<dbReference type="Gene3D" id="3.40.120.10">
    <property type="entry name" value="Alpha-D-Glucose-1,6-Bisphosphate, subunit A, domain 3"/>
    <property type="match status" value="3"/>
</dbReference>
<dbReference type="Gene3D" id="3.30.310.50">
    <property type="entry name" value="Alpha-D-phosphohexomutase, C-terminal domain"/>
    <property type="match status" value="1"/>
</dbReference>
<dbReference type="HAMAP" id="MF_01554_B">
    <property type="entry name" value="GlmM_B"/>
    <property type="match status" value="1"/>
</dbReference>
<dbReference type="InterPro" id="IPR005844">
    <property type="entry name" value="A-D-PHexomutase_a/b/a-I"/>
</dbReference>
<dbReference type="InterPro" id="IPR016055">
    <property type="entry name" value="A-D-PHexomutase_a/b/a-I/II/III"/>
</dbReference>
<dbReference type="InterPro" id="IPR005845">
    <property type="entry name" value="A-D-PHexomutase_a/b/a-II"/>
</dbReference>
<dbReference type="InterPro" id="IPR005846">
    <property type="entry name" value="A-D-PHexomutase_a/b/a-III"/>
</dbReference>
<dbReference type="InterPro" id="IPR005843">
    <property type="entry name" value="A-D-PHexomutase_C"/>
</dbReference>
<dbReference type="InterPro" id="IPR036900">
    <property type="entry name" value="A-D-PHexomutase_C_sf"/>
</dbReference>
<dbReference type="InterPro" id="IPR016066">
    <property type="entry name" value="A-D-PHexomutase_CS"/>
</dbReference>
<dbReference type="InterPro" id="IPR005841">
    <property type="entry name" value="Alpha-D-phosphohexomutase_SF"/>
</dbReference>
<dbReference type="InterPro" id="IPR006352">
    <property type="entry name" value="GlmM_bact"/>
</dbReference>
<dbReference type="InterPro" id="IPR050060">
    <property type="entry name" value="Phosphoglucosamine_mutase"/>
</dbReference>
<dbReference type="NCBIfam" id="TIGR01455">
    <property type="entry name" value="glmM"/>
    <property type="match status" value="1"/>
</dbReference>
<dbReference type="NCBIfam" id="NF008139">
    <property type="entry name" value="PRK10887.1"/>
    <property type="match status" value="1"/>
</dbReference>
<dbReference type="PANTHER" id="PTHR42946:SF1">
    <property type="entry name" value="PHOSPHOGLUCOMUTASE (ALPHA-D-GLUCOSE-1,6-BISPHOSPHATE-DEPENDENT)"/>
    <property type="match status" value="1"/>
</dbReference>
<dbReference type="PANTHER" id="PTHR42946">
    <property type="entry name" value="PHOSPHOHEXOSE MUTASE"/>
    <property type="match status" value="1"/>
</dbReference>
<dbReference type="Pfam" id="PF02878">
    <property type="entry name" value="PGM_PMM_I"/>
    <property type="match status" value="1"/>
</dbReference>
<dbReference type="Pfam" id="PF02879">
    <property type="entry name" value="PGM_PMM_II"/>
    <property type="match status" value="1"/>
</dbReference>
<dbReference type="Pfam" id="PF02880">
    <property type="entry name" value="PGM_PMM_III"/>
    <property type="match status" value="1"/>
</dbReference>
<dbReference type="Pfam" id="PF00408">
    <property type="entry name" value="PGM_PMM_IV"/>
    <property type="match status" value="1"/>
</dbReference>
<dbReference type="PRINTS" id="PR00509">
    <property type="entry name" value="PGMPMM"/>
</dbReference>
<dbReference type="SUPFAM" id="SSF55957">
    <property type="entry name" value="Phosphoglucomutase, C-terminal domain"/>
    <property type="match status" value="1"/>
</dbReference>
<dbReference type="SUPFAM" id="SSF53738">
    <property type="entry name" value="Phosphoglucomutase, first 3 domains"/>
    <property type="match status" value="3"/>
</dbReference>
<dbReference type="PROSITE" id="PS00710">
    <property type="entry name" value="PGM_PMM"/>
    <property type="match status" value="1"/>
</dbReference>
<keyword id="KW-0413">Isomerase</keyword>
<keyword id="KW-0460">Magnesium</keyword>
<keyword id="KW-0479">Metal-binding</keyword>
<keyword id="KW-0597">Phosphoprotein</keyword>
<keyword id="KW-1185">Reference proteome</keyword>
<sequence>MKKKYFGTDGIRGKVGASLITPEFTLKLGWAAGRVLAKSGSKKVLIGKDPRISGYMLEAALEAGLAAAGLRPVLMGPMPTPAVAYLTQTFRATAGIVISASHNPYYDNGIKFFSDQGTKLSEEIELEIEAEIDKELKCVDSSELGKAYRIEDAAGRYIEFCKSTFPSKYNLNGLKVVVDCANGATYHIAPLVISELGADVIAMGVEPDGLNINLNCGATSMQAISERVVKENADFGIAFDGDGDRVMMVDHTGYVLDGDELLYIIARDKLRSGTLKGGAVGTKMSNLGLEQSLKTLGIPFERSDVGDRHVMELMIKNNWCIGAENSGHIICSDHLSTGDGIVSGLQVISAMQSSRMKLYELRQGIKKYPQILLNLGFDNKIDPLQDNDVLAEAKRIETLLGDKGRVLLRKSGTEPVFRIMVEADESEKVVRGYAKSIADKVKV</sequence>
<proteinExistence type="inferred from homology"/>
<comment type="function">
    <text evidence="1">Catalyzes the conversion of glucosamine-6-phosphate to glucosamine-1-phosphate.</text>
</comment>
<comment type="catalytic activity">
    <reaction evidence="1">
        <text>alpha-D-glucosamine 1-phosphate = D-glucosamine 6-phosphate</text>
        <dbReference type="Rhea" id="RHEA:23424"/>
        <dbReference type="ChEBI" id="CHEBI:58516"/>
        <dbReference type="ChEBI" id="CHEBI:58725"/>
        <dbReference type="EC" id="5.4.2.10"/>
    </reaction>
</comment>
<comment type="cofactor">
    <cofactor evidence="1">
        <name>Mg(2+)</name>
        <dbReference type="ChEBI" id="CHEBI:18420"/>
    </cofactor>
    <text evidence="1">Binds 1 Mg(2+) ion per subunit.</text>
</comment>
<comment type="PTM">
    <text evidence="1">Activated by phosphorylation.</text>
</comment>
<comment type="similarity">
    <text evidence="1">Belongs to the phosphohexose mutase family.</text>
</comment>
<feature type="chain" id="PRO_0000305665" description="Phosphoglucosamine mutase">
    <location>
        <begin position="1"/>
        <end position="443"/>
    </location>
</feature>
<feature type="active site" description="Phosphoserine intermediate" evidence="1">
    <location>
        <position position="101"/>
    </location>
</feature>
<feature type="binding site" description="via phosphate group" evidence="1">
    <location>
        <position position="101"/>
    </location>
    <ligand>
        <name>Mg(2+)</name>
        <dbReference type="ChEBI" id="CHEBI:18420"/>
    </ligand>
</feature>
<feature type="binding site" evidence="1">
    <location>
        <position position="240"/>
    </location>
    <ligand>
        <name>Mg(2+)</name>
        <dbReference type="ChEBI" id="CHEBI:18420"/>
    </ligand>
</feature>
<feature type="binding site" evidence="1">
    <location>
        <position position="242"/>
    </location>
    <ligand>
        <name>Mg(2+)</name>
        <dbReference type="ChEBI" id="CHEBI:18420"/>
    </ligand>
</feature>
<feature type="binding site" evidence="1">
    <location>
        <position position="244"/>
    </location>
    <ligand>
        <name>Mg(2+)</name>
        <dbReference type="ChEBI" id="CHEBI:18420"/>
    </ligand>
</feature>
<feature type="modified residue" description="Phosphoserine" evidence="1">
    <location>
        <position position="101"/>
    </location>
</feature>
<accession>A1ST41</accession>
<gene>
    <name evidence="1" type="primary">glmM</name>
    <name type="ordered locus">Ping_0813</name>
</gene>
<protein>
    <recommendedName>
        <fullName evidence="1">Phosphoglucosamine mutase</fullName>
        <ecNumber evidence="1">5.4.2.10</ecNumber>
    </recommendedName>
</protein>